<sequence length="99" mass="10936">MALTLTDVKRIAHLARLEMADADAEHMLGQLNELFGLVEQMQAVDTAGIAPLAHPIEQIQEVAQRLREDAVTEVVNRDDNQRPAPAVQDGLYLVPKVIE</sequence>
<evidence type="ECO:0000255" key="1">
    <source>
        <dbReference type="HAMAP-Rule" id="MF_00122"/>
    </source>
</evidence>
<accession>Q39BW2</accession>
<proteinExistence type="inferred from homology"/>
<name>GATC_BURL3</name>
<protein>
    <recommendedName>
        <fullName evidence="1">Aspartyl/glutamyl-tRNA(Asn/Gln) amidotransferase subunit C</fullName>
        <shortName evidence="1">Asp/Glu-ADT subunit C</shortName>
        <ecNumber evidence="1">6.3.5.-</ecNumber>
    </recommendedName>
</protein>
<feature type="chain" id="PRO_1000016093" description="Aspartyl/glutamyl-tRNA(Asn/Gln) amidotransferase subunit C">
    <location>
        <begin position="1"/>
        <end position="99"/>
    </location>
</feature>
<reference key="1">
    <citation type="submission" date="2005-10" db="EMBL/GenBank/DDBJ databases">
        <title>Complete sequence of chromosome 1 of Burkholderia sp. 383.</title>
        <authorList>
            <consortium name="US DOE Joint Genome Institute"/>
            <person name="Copeland A."/>
            <person name="Lucas S."/>
            <person name="Lapidus A."/>
            <person name="Barry K."/>
            <person name="Detter J.C."/>
            <person name="Glavina T."/>
            <person name="Hammon N."/>
            <person name="Israni S."/>
            <person name="Pitluck S."/>
            <person name="Chain P."/>
            <person name="Malfatti S."/>
            <person name="Shin M."/>
            <person name="Vergez L."/>
            <person name="Schmutz J."/>
            <person name="Larimer F."/>
            <person name="Land M."/>
            <person name="Kyrpides N."/>
            <person name="Lykidis A."/>
            <person name="Richardson P."/>
        </authorList>
    </citation>
    <scope>NUCLEOTIDE SEQUENCE [LARGE SCALE GENOMIC DNA]</scope>
    <source>
        <strain>ATCC 17760 / DSM 23089 / LMG 22485 / NCIMB 9086 / R18194 / 383</strain>
    </source>
</reference>
<dbReference type="EC" id="6.3.5.-" evidence="1"/>
<dbReference type="EMBL" id="CP000151">
    <property type="protein sequence ID" value="ABB10054.1"/>
    <property type="molecule type" value="Genomic_DNA"/>
</dbReference>
<dbReference type="RefSeq" id="WP_011353557.1">
    <property type="nucleotide sequence ID" value="NC_007510.1"/>
</dbReference>
<dbReference type="SMR" id="Q39BW2"/>
<dbReference type="GeneID" id="45096330"/>
<dbReference type="KEGG" id="bur:Bcep18194_A6460"/>
<dbReference type="PATRIC" id="fig|482957.22.peg.3492"/>
<dbReference type="HOGENOM" id="CLU_105899_2_2_4"/>
<dbReference type="Proteomes" id="UP000002705">
    <property type="component" value="Chromosome 1"/>
</dbReference>
<dbReference type="GO" id="GO:0050566">
    <property type="term" value="F:asparaginyl-tRNA synthase (glutamine-hydrolyzing) activity"/>
    <property type="evidence" value="ECO:0007669"/>
    <property type="project" value="RHEA"/>
</dbReference>
<dbReference type="GO" id="GO:0005524">
    <property type="term" value="F:ATP binding"/>
    <property type="evidence" value="ECO:0007669"/>
    <property type="project" value="UniProtKB-KW"/>
</dbReference>
<dbReference type="GO" id="GO:0050567">
    <property type="term" value="F:glutaminyl-tRNA synthase (glutamine-hydrolyzing) activity"/>
    <property type="evidence" value="ECO:0007669"/>
    <property type="project" value="UniProtKB-UniRule"/>
</dbReference>
<dbReference type="GO" id="GO:0070681">
    <property type="term" value="P:glutaminyl-tRNAGln biosynthesis via transamidation"/>
    <property type="evidence" value="ECO:0007669"/>
    <property type="project" value="TreeGrafter"/>
</dbReference>
<dbReference type="GO" id="GO:0006450">
    <property type="term" value="P:regulation of translational fidelity"/>
    <property type="evidence" value="ECO:0007669"/>
    <property type="project" value="InterPro"/>
</dbReference>
<dbReference type="GO" id="GO:0006412">
    <property type="term" value="P:translation"/>
    <property type="evidence" value="ECO:0007669"/>
    <property type="project" value="UniProtKB-UniRule"/>
</dbReference>
<dbReference type="Gene3D" id="1.10.20.60">
    <property type="entry name" value="Glu-tRNAGln amidotransferase C subunit, N-terminal domain"/>
    <property type="match status" value="1"/>
</dbReference>
<dbReference type="HAMAP" id="MF_00122">
    <property type="entry name" value="GatC"/>
    <property type="match status" value="1"/>
</dbReference>
<dbReference type="InterPro" id="IPR036113">
    <property type="entry name" value="Asp/Glu-ADT_sf_sub_c"/>
</dbReference>
<dbReference type="InterPro" id="IPR003837">
    <property type="entry name" value="GatC"/>
</dbReference>
<dbReference type="NCBIfam" id="TIGR00135">
    <property type="entry name" value="gatC"/>
    <property type="match status" value="1"/>
</dbReference>
<dbReference type="PANTHER" id="PTHR15004">
    <property type="entry name" value="GLUTAMYL-TRNA(GLN) AMIDOTRANSFERASE SUBUNIT C, MITOCHONDRIAL"/>
    <property type="match status" value="1"/>
</dbReference>
<dbReference type="PANTHER" id="PTHR15004:SF0">
    <property type="entry name" value="GLUTAMYL-TRNA(GLN) AMIDOTRANSFERASE SUBUNIT C, MITOCHONDRIAL"/>
    <property type="match status" value="1"/>
</dbReference>
<dbReference type="Pfam" id="PF02686">
    <property type="entry name" value="GatC"/>
    <property type="match status" value="1"/>
</dbReference>
<dbReference type="SUPFAM" id="SSF141000">
    <property type="entry name" value="Glu-tRNAGln amidotransferase C subunit"/>
    <property type="match status" value="1"/>
</dbReference>
<gene>
    <name evidence="1" type="primary">gatC</name>
    <name type="ordered locus">Bcep18194_A6460</name>
</gene>
<keyword id="KW-0067">ATP-binding</keyword>
<keyword id="KW-0436">Ligase</keyword>
<keyword id="KW-0547">Nucleotide-binding</keyword>
<keyword id="KW-0648">Protein biosynthesis</keyword>
<comment type="function">
    <text evidence="1">Allows the formation of correctly charged Asn-tRNA(Asn) or Gln-tRNA(Gln) through the transamidation of misacylated Asp-tRNA(Asn) or Glu-tRNA(Gln) in organisms which lack either or both of asparaginyl-tRNA or glutaminyl-tRNA synthetases. The reaction takes place in the presence of glutamine and ATP through an activated phospho-Asp-tRNA(Asn) or phospho-Glu-tRNA(Gln).</text>
</comment>
<comment type="catalytic activity">
    <reaction evidence="1">
        <text>L-glutamyl-tRNA(Gln) + L-glutamine + ATP + H2O = L-glutaminyl-tRNA(Gln) + L-glutamate + ADP + phosphate + H(+)</text>
        <dbReference type="Rhea" id="RHEA:17521"/>
        <dbReference type="Rhea" id="RHEA-COMP:9681"/>
        <dbReference type="Rhea" id="RHEA-COMP:9684"/>
        <dbReference type="ChEBI" id="CHEBI:15377"/>
        <dbReference type="ChEBI" id="CHEBI:15378"/>
        <dbReference type="ChEBI" id="CHEBI:29985"/>
        <dbReference type="ChEBI" id="CHEBI:30616"/>
        <dbReference type="ChEBI" id="CHEBI:43474"/>
        <dbReference type="ChEBI" id="CHEBI:58359"/>
        <dbReference type="ChEBI" id="CHEBI:78520"/>
        <dbReference type="ChEBI" id="CHEBI:78521"/>
        <dbReference type="ChEBI" id="CHEBI:456216"/>
    </reaction>
</comment>
<comment type="catalytic activity">
    <reaction evidence="1">
        <text>L-aspartyl-tRNA(Asn) + L-glutamine + ATP + H2O = L-asparaginyl-tRNA(Asn) + L-glutamate + ADP + phosphate + 2 H(+)</text>
        <dbReference type="Rhea" id="RHEA:14513"/>
        <dbReference type="Rhea" id="RHEA-COMP:9674"/>
        <dbReference type="Rhea" id="RHEA-COMP:9677"/>
        <dbReference type="ChEBI" id="CHEBI:15377"/>
        <dbReference type="ChEBI" id="CHEBI:15378"/>
        <dbReference type="ChEBI" id="CHEBI:29985"/>
        <dbReference type="ChEBI" id="CHEBI:30616"/>
        <dbReference type="ChEBI" id="CHEBI:43474"/>
        <dbReference type="ChEBI" id="CHEBI:58359"/>
        <dbReference type="ChEBI" id="CHEBI:78515"/>
        <dbReference type="ChEBI" id="CHEBI:78516"/>
        <dbReference type="ChEBI" id="CHEBI:456216"/>
    </reaction>
</comment>
<comment type="subunit">
    <text evidence="1">Heterotrimer of A, B and C subunits.</text>
</comment>
<comment type="similarity">
    <text evidence="1">Belongs to the GatC family.</text>
</comment>
<organism>
    <name type="scientific">Burkholderia lata (strain ATCC 17760 / DSM 23089 / LMG 22485 / NCIMB 9086 / R18194 / 383)</name>
    <dbReference type="NCBI Taxonomy" id="482957"/>
    <lineage>
        <taxon>Bacteria</taxon>
        <taxon>Pseudomonadati</taxon>
        <taxon>Pseudomonadota</taxon>
        <taxon>Betaproteobacteria</taxon>
        <taxon>Burkholderiales</taxon>
        <taxon>Burkholderiaceae</taxon>
        <taxon>Burkholderia</taxon>
        <taxon>Burkholderia cepacia complex</taxon>
    </lineage>
</organism>